<reference key="1">
    <citation type="submission" date="2005-11" db="EMBL/GenBank/DDBJ databases">
        <title>An analysis of CLE genes of Arabidopsis.</title>
        <authorList>
            <person name="Sawa S."/>
            <person name="Fukuda H."/>
        </authorList>
    </citation>
    <scope>NUCLEOTIDE SEQUENCE [MRNA]</scope>
</reference>
<reference key="2">
    <citation type="journal article" date="1998" name="DNA Res.">
        <title>Structural analysis of Arabidopsis thaliana chromosome 5. VIII. Sequence features of the regions of 1,081,958 bp covered by seventeen physically assigned P1 and TAC clones.</title>
        <authorList>
            <person name="Asamizu E."/>
            <person name="Sato S."/>
            <person name="Kaneko T."/>
            <person name="Nakamura Y."/>
            <person name="Kotani H."/>
            <person name="Miyajima N."/>
            <person name="Tabata S."/>
        </authorList>
    </citation>
    <scope>NUCLEOTIDE SEQUENCE [LARGE SCALE GENOMIC DNA]</scope>
    <source>
        <strain>cv. Columbia</strain>
    </source>
</reference>
<reference key="3">
    <citation type="journal article" date="2017" name="Plant J.">
        <title>Araport11: a complete reannotation of the Arabidopsis thaliana reference genome.</title>
        <authorList>
            <person name="Cheng C.Y."/>
            <person name="Krishnakumar V."/>
            <person name="Chan A.P."/>
            <person name="Thibaud-Nissen F."/>
            <person name="Schobel S."/>
            <person name="Town C.D."/>
        </authorList>
    </citation>
    <scope>GENOME REANNOTATION</scope>
    <source>
        <strain>cv. Columbia</strain>
    </source>
</reference>
<reference key="4">
    <citation type="journal article" date="2006" name="Plant Biotechnol. J.">
        <title>Simultaneous high-throughput recombinational cloning of open reading frames in closed and open configurations.</title>
        <authorList>
            <person name="Underwood B.A."/>
            <person name="Vanderhaeghen R."/>
            <person name="Whitford R."/>
            <person name="Town C.D."/>
            <person name="Hilson P."/>
        </authorList>
    </citation>
    <scope>NUCLEOTIDE SEQUENCE [LARGE SCALE MRNA]</scope>
    <source>
        <strain>cv. Columbia</strain>
    </source>
</reference>
<reference key="5">
    <citation type="submission" date="2006-08" db="EMBL/GenBank/DDBJ databases">
        <title>Arabidopsis ORF Clones.</title>
        <authorList>
            <person name="Quinitio C."/>
            <person name="Chen H."/>
            <person name="Kim C.J."/>
            <person name="Shinn P."/>
            <person name="Ecker J.R."/>
        </authorList>
    </citation>
    <scope>NUCLEOTIDE SEQUENCE [LARGE SCALE MRNA]</scope>
    <source>
        <strain>cv. Columbia</strain>
    </source>
</reference>
<reference key="6">
    <citation type="submission" date="2002-03" db="EMBL/GenBank/DDBJ databases">
        <title>Full-length cDNA from Arabidopsis thaliana.</title>
        <authorList>
            <person name="Brover V.V."/>
            <person name="Troukhan M.E."/>
            <person name="Alexandrov N.A."/>
            <person name="Lu Y.-P."/>
            <person name="Flavell R.B."/>
            <person name="Feldmann K.A."/>
        </authorList>
    </citation>
    <scope>NUCLEOTIDE SEQUENCE [LARGE SCALE MRNA]</scope>
</reference>
<reference key="7">
    <citation type="journal article" date="2008" name="Cell. Mol. Life Sci.">
        <title>The CLE family of plant polypeptide signaling molecules.</title>
        <authorList>
            <person name="Jun J.H."/>
            <person name="Fiume E."/>
            <person name="Fletcher J.C."/>
        </authorList>
    </citation>
    <scope>REVIEW</scope>
</reference>
<reference key="8">
    <citation type="journal article" date="2008" name="Curr. Opin. Plant Biol.">
        <title>Diverse and conserved roles of CLE peptides.</title>
        <authorList>
            <person name="Mitchum M.G."/>
            <person name="Wang X."/>
            <person name="Davis E.L."/>
        </authorList>
    </citation>
    <scope>REVIEW</scope>
</reference>
<reference key="9">
    <citation type="journal article" date="2010" name="Protoplasma">
        <title>CLE peptide signaling during plant development.</title>
        <authorList>
            <person name="Wang G."/>
            <person name="Fiers M."/>
        </authorList>
    </citation>
    <scope>REVIEW</scope>
</reference>
<comment type="function">
    <molecule>CLE46p</molecule>
    <text evidence="1">Extracellular signal peptide that regulates cell fate.</text>
</comment>
<comment type="subcellular location">
    <molecule>CLE46p</molecule>
    <subcellularLocation>
        <location evidence="2">Secreted</location>
        <location evidence="2">Extracellular space</location>
    </subcellularLocation>
</comment>
<comment type="PTM">
    <molecule>CLE46p</molecule>
    <text evidence="2">The O-glycosylation (arabinosylation) of the hydroxyproline Pro-64 enhances binding affinity of the CLE46p peptide for its receptor.</text>
</comment>
<comment type="similarity">
    <text evidence="6">Belongs to the CLV3/ESR signal peptide family.</text>
</comment>
<comment type="sequence caution" evidence="6">
    <conflict type="erroneous termination">
        <sequence resource="EMBL-CDS" id="ABK28767"/>
    </conflict>
    <text>Extended C-terminus.</text>
</comment>
<feature type="signal peptide" evidence="3">
    <location>
        <begin position="1"/>
        <end position="26"/>
    </location>
</feature>
<feature type="chain" id="PRO_0000401290" description="CLAVATA3/ESR (CLE)-related protein 46">
    <location>
        <begin position="27"/>
        <end position="76"/>
    </location>
</feature>
<feature type="peptide" id="PRO_0000401291" description="CLE46p" evidence="2">
    <location>
        <begin position="58"/>
        <end position="69"/>
    </location>
</feature>
<feature type="region of interest" description="Disordered" evidence="4">
    <location>
        <begin position="53"/>
        <end position="76"/>
    </location>
</feature>
<feature type="modified residue" description="Hydroxyproline" evidence="2">
    <location>
        <position position="61"/>
    </location>
</feature>
<feature type="modified residue" description="Hydroxyproline" evidence="2">
    <location>
        <position position="64"/>
    </location>
</feature>
<feature type="glycosylation site" description="O-linked (Ara...) hydroxyproline" evidence="2">
    <location>
        <position position="64"/>
    </location>
</feature>
<keyword id="KW-0217">Developmental protein</keyword>
<keyword id="KW-0221">Differentiation</keyword>
<keyword id="KW-0325">Glycoprotein</keyword>
<keyword id="KW-0379">Hydroxylation</keyword>
<keyword id="KW-1185">Reference proteome</keyword>
<keyword id="KW-0964">Secreted</keyword>
<keyword id="KW-0732">Signal</keyword>
<protein>
    <recommendedName>
        <fullName evidence="5">CLAVATA3/ESR (CLE)-related protein 46</fullName>
    </recommendedName>
    <component>
        <recommendedName>
            <fullName evidence="5">CLE46p</fullName>
        </recommendedName>
    </component>
</protein>
<sequence>MRRHDIIIKLLLLMCLLLSRFVTRECQEVHFKIGPAKIIAKPNNARVMPTWGEEKKWHKHPSGPNPTGNRHPPVKH</sequence>
<gene>
    <name evidence="5" type="primary">CLE46</name>
    <name evidence="7" type="ordered locus">At5g59305</name>
    <name evidence="8" type="ORF">MNC17</name>
</gene>
<organism>
    <name type="scientific">Arabidopsis thaliana</name>
    <name type="common">Mouse-ear cress</name>
    <dbReference type="NCBI Taxonomy" id="3702"/>
    <lineage>
        <taxon>Eukaryota</taxon>
        <taxon>Viridiplantae</taxon>
        <taxon>Streptophyta</taxon>
        <taxon>Embryophyta</taxon>
        <taxon>Tracheophyta</taxon>
        <taxon>Spermatophyta</taxon>
        <taxon>Magnoliopsida</taxon>
        <taxon>eudicotyledons</taxon>
        <taxon>Gunneridae</taxon>
        <taxon>Pentapetalae</taxon>
        <taxon>rosids</taxon>
        <taxon>malvids</taxon>
        <taxon>Brassicales</taxon>
        <taxon>Brassicaceae</taxon>
        <taxon>Camelineae</taxon>
        <taxon>Arabidopsis</taxon>
    </lineage>
</organism>
<evidence type="ECO:0000250" key="1"/>
<evidence type="ECO:0000250" key="2">
    <source>
        <dbReference type="UniProtKB" id="O49519"/>
    </source>
</evidence>
<evidence type="ECO:0000255" key="3"/>
<evidence type="ECO:0000256" key="4">
    <source>
        <dbReference type="SAM" id="MobiDB-lite"/>
    </source>
</evidence>
<evidence type="ECO:0000303" key="5">
    <source>
    </source>
</evidence>
<evidence type="ECO:0000305" key="6"/>
<evidence type="ECO:0000312" key="7">
    <source>
        <dbReference type="Araport" id="AT5G59305"/>
    </source>
</evidence>
<evidence type="ECO:0000312" key="8">
    <source>
        <dbReference type="EMBL" id="AB016890"/>
    </source>
</evidence>
<dbReference type="EMBL" id="AB241063">
    <property type="protein sequence ID" value="BAE94179.1"/>
    <property type="molecule type" value="mRNA"/>
</dbReference>
<dbReference type="EMBL" id="AB016890">
    <property type="status" value="NOT_ANNOTATED_CDS"/>
    <property type="molecule type" value="Genomic_DNA"/>
</dbReference>
<dbReference type="EMBL" id="CP002688">
    <property type="protein sequence ID" value="AED97169.1"/>
    <property type="molecule type" value="Genomic_DNA"/>
</dbReference>
<dbReference type="EMBL" id="DQ447094">
    <property type="protein sequence ID" value="ABE66263.1"/>
    <property type="molecule type" value="mRNA"/>
</dbReference>
<dbReference type="EMBL" id="DQ653382">
    <property type="protein sequence ID" value="ABK28767.1"/>
    <property type="status" value="ALT_SEQ"/>
    <property type="molecule type" value="mRNA"/>
</dbReference>
<dbReference type="EMBL" id="BT026400">
    <property type="protein sequence ID" value="ABH04507.1"/>
    <property type="molecule type" value="mRNA"/>
</dbReference>
<dbReference type="EMBL" id="AY085895">
    <property type="protein sequence ID" value="AAM63107.1"/>
    <property type="molecule type" value="mRNA"/>
</dbReference>
<dbReference type="RefSeq" id="NP_568903.1">
    <property type="nucleotide sequence ID" value="NM_125321.3"/>
</dbReference>
<dbReference type="STRING" id="3702.Q8LDN4"/>
<dbReference type="GlyCosmos" id="Q8LDN4">
    <property type="glycosylation" value="1 site, No reported glycans"/>
</dbReference>
<dbReference type="PaxDb" id="3702-AT5G59305.1"/>
<dbReference type="EnsemblPlants" id="AT5G59305.1">
    <property type="protein sequence ID" value="AT5G59305.1"/>
    <property type="gene ID" value="AT5G59305"/>
</dbReference>
<dbReference type="GeneID" id="836049"/>
<dbReference type="Gramene" id="AT5G59305.1">
    <property type="protein sequence ID" value="AT5G59305.1"/>
    <property type="gene ID" value="AT5G59305"/>
</dbReference>
<dbReference type="KEGG" id="ath:AT5G59305"/>
<dbReference type="Araport" id="AT5G59305"/>
<dbReference type="TAIR" id="AT5G59305"/>
<dbReference type="HOGENOM" id="CLU_174348_0_0_1"/>
<dbReference type="InParanoid" id="Q8LDN4"/>
<dbReference type="OMA" id="WHKHPSG"/>
<dbReference type="OrthoDB" id="912098at2759"/>
<dbReference type="PhylomeDB" id="Q8LDN4"/>
<dbReference type="PRO" id="PR:Q8LDN4"/>
<dbReference type="Proteomes" id="UP000006548">
    <property type="component" value="Chromosome 5"/>
</dbReference>
<dbReference type="ExpressionAtlas" id="Q8LDN4">
    <property type="expression patterns" value="baseline and differential"/>
</dbReference>
<dbReference type="GO" id="GO:0005576">
    <property type="term" value="C:extracellular region"/>
    <property type="evidence" value="ECO:0007669"/>
    <property type="project" value="UniProtKB-SubCell"/>
</dbReference>
<dbReference type="GO" id="GO:0045168">
    <property type="term" value="P:cell-cell signaling involved in cell fate commitment"/>
    <property type="evidence" value="ECO:0000250"/>
    <property type="project" value="UniProtKB"/>
</dbReference>
<proteinExistence type="inferred from homology"/>
<accession>Q8LDN4</accession>
<accession>A0MFQ6</accession>
<name>CLE46_ARATH</name>